<feature type="chain" id="PRO_0000245083" description="Matrix protein VP40">
    <location>
        <begin position="1"/>
        <end position="326"/>
    </location>
</feature>
<feature type="region of interest" description="Important for oligomerization" evidence="1">
    <location>
        <begin position="212"/>
        <end position="214"/>
    </location>
</feature>
<feature type="region of interest" description="Membrane-binding">
    <location>
        <begin position="213"/>
        <end position="326"/>
    </location>
</feature>
<feature type="short sequence motif" description="PTAP/PSAP motif">
    <location>
        <begin position="7"/>
        <end position="10"/>
    </location>
</feature>
<feature type="short sequence motif" description="PPXY motif">
    <location>
        <begin position="10"/>
        <end position="13"/>
    </location>
</feature>
<feature type="helix" evidence="5">
    <location>
        <begin position="61"/>
        <end position="63"/>
    </location>
</feature>
<feature type="strand" evidence="5">
    <location>
        <begin position="71"/>
        <end position="83"/>
    </location>
</feature>
<feature type="strand" evidence="5">
    <location>
        <begin position="86"/>
        <end position="101"/>
    </location>
</feature>
<feature type="strand" evidence="5">
    <location>
        <begin position="103"/>
        <end position="106"/>
    </location>
</feature>
<feature type="helix" evidence="5">
    <location>
        <begin position="108"/>
        <end position="116"/>
    </location>
</feature>
<feature type="strand" evidence="5">
    <location>
        <begin position="120"/>
        <end position="125"/>
    </location>
</feature>
<feature type="strand" evidence="5">
    <location>
        <begin position="128"/>
        <end position="130"/>
    </location>
</feature>
<feature type="strand" evidence="5">
    <location>
        <begin position="132"/>
        <end position="137"/>
    </location>
</feature>
<feature type="helix" evidence="5">
    <location>
        <begin position="148"/>
        <end position="152"/>
    </location>
</feature>
<feature type="strand" evidence="5">
    <location>
        <begin position="153"/>
        <end position="158"/>
    </location>
</feature>
<feature type="helix" evidence="5">
    <location>
        <begin position="159"/>
        <end position="162"/>
    </location>
</feature>
<feature type="strand" evidence="5">
    <location>
        <begin position="173"/>
        <end position="185"/>
    </location>
</feature>
<feature type="strand" evidence="5">
    <location>
        <begin position="203"/>
        <end position="208"/>
    </location>
</feature>
<feature type="helix" evidence="5">
    <location>
        <begin position="228"/>
        <end position="231"/>
    </location>
</feature>
<feature type="helix" evidence="5">
    <location>
        <begin position="234"/>
        <end position="243"/>
    </location>
</feature>
<feature type="helix" evidence="5">
    <location>
        <begin position="244"/>
        <end position="246"/>
    </location>
</feature>
<feature type="strand" evidence="5">
    <location>
        <begin position="248"/>
        <end position="253"/>
    </location>
</feature>
<feature type="helix" evidence="5">
    <location>
        <begin position="254"/>
        <end position="256"/>
    </location>
</feature>
<feature type="strand" evidence="5">
    <location>
        <begin position="258"/>
        <end position="262"/>
    </location>
</feature>
<feature type="helix" evidence="5">
    <location>
        <begin position="265"/>
        <end position="271"/>
    </location>
</feature>
<feature type="strand" evidence="5">
    <location>
        <begin position="284"/>
        <end position="288"/>
    </location>
</feature>
<feature type="turn" evidence="5">
    <location>
        <begin position="298"/>
        <end position="301"/>
    </location>
</feature>
<feature type="strand" evidence="5">
    <location>
        <begin position="304"/>
        <end position="310"/>
    </location>
</feature>
<dbReference type="EMBL" id="AY354458">
    <property type="protein sequence ID" value="AAQ55047.1"/>
    <property type="molecule type" value="Genomic_RNA"/>
</dbReference>
<dbReference type="RefSeq" id="NP_066245.1">
    <property type="nucleotide sequence ID" value="NC_002549.1"/>
</dbReference>
<dbReference type="PDB" id="1ES6">
    <property type="method" value="X-ray"/>
    <property type="resolution" value="2.00 A"/>
    <property type="chains" value="A=31-326"/>
</dbReference>
<dbReference type="PDB" id="8YHV">
    <property type="method" value="X-ray"/>
    <property type="resolution" value="2.35 A"/>
    <property type="chains" value="A=31-326"/>
</dbReference>
<dbReference type="PDBsum" id="1ES6"/>
<dbReference type="PDBsum" id="8YHV"/>
<dbReference type="SMR" id="Q77DJ6"/>
<dbReference type="ABCD" id="Q77DJ6">
    <property type="antibodies" value="2 sequenced antibodies"/>
</dbReference>
<dbReference type="DNASU" id="911825"/>
<dbReference type="GeneID" id="911825"/>
<dbReference type="KEGG" id="vg:911825"/>
<dbReference type="EvolutionaryTrace" id="Q77DJ6"/>
<dbReference type="Proteomes" id="UP000007208">
    <property type="component" value="Genome"/>
</dbReference>
<dbReference type="GO" id="GO:0005576">
    <property type="term" value="C:extracellular region"/>
    <property type="evidence" value="ECO:0007669"/>
    <property type="project" value="UniProtKB-SubCell"/>
</dbReference>
<dbReference type="GO" id="GO:0033645">
    <property type="term" value="C:host cell endomembrane system"/>
    <property type="evidence" value="ECO:0007669"/>
    <property type="project" value="UniProtKB-SubCell"/>
</dbReference>
<dbReference type="GO" id="GO:0044185">
    <property type="term" value="C:host cell late endosome membrane"/>
    <property type="evidence" value="ECO:0007669"/>
    <property type="project" value="UniProtKB-SubCell"/>
</dbReference>
<dbReference type="GO" id="GO:0020002">
    <property type="term" value="C:host cell plasma membrane"/>
    <property type="evidence" value="ECO:0007669"/>
    <property type="project" value="UniProtKB-SubCell"/>
</dbReference>
<dbReference type="GO" id="GO:0016020">
    <property type="term" value="C:membrane"/>
    <property type="evidence" value="ECO:0007669"/>
    <property type="project" value="UniProtKB-KW"/>
</dbReference>
<dbReference type="GO" id="GO:1990904">
    <property type="term" value="C:ribonucleoprotein complex"/>
    <property type="evidence" value="ECO:0007669"/>
    <property type="project" value="UniProtKB-KW"/>
</dbReference>
<dbReference type="GO" id="GO:0055036">
    <property type="term" value="C:virion membrane"/>
    <property type="evidence" value="ECO:0007669"/>
    <property type="project" value="UniProtKB-SubCell"/>
</dbReference>
<dbReference type="GO" id="GO:0003723">
    <property type="term" value="F:RNA binding"/>
    <property type="evidence" value="ECO:0007669"/>
    <property type="project" value="UniProtKB-KW"/>
</dbReference>
<dbReference type="GO" id="GO:0039660">
    <property type="term" value="F:structural constituent of virion"/>
    <property type="evidence" value="ECO:0007669"/>
    <property type="project" value="UniProtKB-KW"/>
</dbReference>
<dbReference type="GO" id="GO:0052170">
    <property type="term" value="P:symbiont-mediated suppression of host innate immune response"/>
    <property type="evidence" value="ECO:0007669"/>
    <property type="project" value="UniProtKB-KW"/>
</dbReference>
<dbReference type="GO" id="GO:0039702">
    <property type="term" value="P:viral budding via host ESCRT complex"/>
    <property type="evidence" value="ECO:0007669"/>
    <property type="project" value="UniProtKB-KW"/>
</dbReference>
<dbReference type="Gene3D" id="2.60.510.10">
    <property type="entry name" value="EV matrix protein"/>
    <property type="match status" value="1"/>
</dbReference>
<dbReference type="Gene3D" id="2.70.20.20">
    <property type="entry name" value="Matrix protein VP40, N-terminal domain"/>
    <property type="match status" value="1"/>
</dbReference>
<dbReference type="InterPro" id="IPR008986">
    <property type="entry name" value="EV_matrix"/>
</dbReference>
<dbReference type="InterPro" id="IPR035092">
    <property type="entry name" value="EV_matrix_protein_C"/>
</dbReference>
<dbReference type="InterPro" id="IPR043079">
    <property type="entry name" value="EV_matrix_protein_N"/>
</dbReference>
<dbReference type="InterPro" id="IPR038057">
    <property type="entry name" value="EV_matrix_sf"/>
</dbReference>
<dbReference type="Pfam" id="PF07447">
    <property type="entry name" value="Matrix_Filo"/>
    <property type="match status" value="1"/>
</dbReference>
<dbReference type="PIRSF" id="PIRSF018327">
    <property type="entry name" value="VP40_FiloV"/>
    <property type="match status" value="1"/>
</dbReference>
<dbReference type="SUPFAM" id="SSF50012">
    <property type="entry name" value="EV matrix protein"/>
    <property type="match status" value="2"/>
</dbReference>
<protein>
    <recommendedName>
        <fullName>Matrix protein VP40</fullName>
    </recommendedName>
    <alternativeName>
        <fullName evidence="3">Ebola VP40</fullName>
        <shortName evidence="3">eVP40</shortName>
    </alternativeName>
    <alternativeName>
        <fullName>Membrane-associated protein VP40</fullName>
    </alternativeName>
</protein>
<sequence length="326" mass="35183">MRRVILPTAPPEYMEAIYPVRSNSTIARGGNSNTGFLTPESVNGDTPSNPLRPIADDTIDHASHTPGSVSSAFILEAMVNVISGPKVLMKQIPIWLPLGVADQKTYSFDSTTAAIMLASYTITHFGKATNPLVRVNRLGPGIPDHPLRLLRIGNQAFLQEFVLPPVQLPQYFTFDLTALKLITQPLPAATWTDDTPTGSNGALRPGISFHPKLRPILLPNKSGKKGNSADLTSPEKIQAIMTSLQDFKIVPIDPTKNIMGIEVPETLVHKLTGKKVTSKNGQPIIPVLLPKYIGLDPVAPGDLTMVITQDCDTCHSPASLPAVIEK</sequence>
<organism>
    <name type="scientific">Zaire ebolavirus (strain Kikwit-95)</name>
    <name type="common">ZEBOV</name>
    <name type="synonym">Zaire Ebola virus</name>
    <dbReference type="NCBI Taxonomy" id="128951"/>
    <lineage>
        <taxon>Viruses</taxon>
        <taxon>Riboviria</taxon>
        <taxon>Orthornavirae</taxon>
        <taxon>Negarnaviricota</taxon>
        <taxon>Haploviricotina</taxon>
        <taxon>Monjiviricetes</taxon>
        <taxon>Mononegavirales</taxon>
        <taxon>Filoviridae</taxon>
        <taxon>Orthoebolavirus</taxon>
        <taxon>Orthoebolavirus zairense</taxon>
        <taxon>Zaire ebolavirus</taxon>
    </lineage>
</organism>
<gene>
    <name type="primary">VP40</name>
</gene>
<accession>Q77DJ6</accession>
<comment type="function">
    <text evidence="3">Plays an essential role virus particle assembly and budding. Acts by interacting with viral ribonucleocapsid and host members of the ESCRT (endosomal sorting complex required for transport) system such as host VPS4, PDCD6IP/ALIX, NEDD4 or TGS101. The interaction with host E3 ubiquitin ligase SMURF2 also facilitates virus budding. May play a role in immune cell dysfunction by being packaged into exosomes that can decrease the viability of recipient cells (via RNAi suppression and exosome-bystander apoptosis).</text>
</comment>
<comment type="subunit">
    <text evidence="3">Homodimer. Homohexamer. Homooctamer. Exists as a dimer until it reorganizes at the plasma membrane into a hexameric form using phosphatidylinositol 4,5-bisphosphate (PI(4,5)P2). Hexamers are critical for budding. Octamers function in genome replication and RNA binding. Interacts with host TSG101. As a homohexamer, interacts with the WW domain 3 of host NEDD4. Interacts with the nucleoprotein/NP. Interacts (via YPx(n)L/I motif) with host PDCD6IP/ALIX; this interaction supports efficient egress of viral particles. Interacts with VP35. Interacts with host ITCH; this interaction is required for efficient egress. Interacts (via PPXY motif) with host SMURF2 (via WW domains); the interaction positively regulates virus budding.</text>
</comment>
<comment type="subcellular location">
    <subcellularLocation>
        <location evidence="3">Host cytoplasm</location>
    </subcellularLocation>
    <subcellularLocation>
        <location evidence="3">Host cell membrane</location>
    </subcellularLocation>
    <subcellularLocation>
        <location evidence="2">Virion membrane</location>
        <topology evidence="2">Peripheral membrane protein</topology>
    </subcellularLocation>
    <subcellularLocation>
        <location evidence="2">Host late endosome membrane</location>
        <topology evidence="2">Peripheral membrane protein</topology>
    </subcellularLocation>
    <subcellularLocation>
        <location evidence="2">Host cell membrane</location>
        <topology evidence="2">Peripheral membrane protein</topology>
        <orientation evidence="2">Cytoplasmic side</orientation>
    </subcellularLocation>
    <subcellularLocation>
        <location evidence="2">Host endomembrane system</location>
        <topology evidence="2">Peripheral membrane protein</topology>
    </subcellularLocation>
    <subcellularLocation>
        <location evidence="3">Secreted</location>
        <location evidence="3">Extracellular exosome</location>
    </subcellularLocation>
    <text evidence="2">In virion, localizes on the inner side of the membrane. In the host cell, it is found associated with virus-induced membrane proliferation foci and probably also in multivesicular bodies. These VP40-enriched membrane clusters are then redistributed to the plasma membrane where budding takes place.</text>
</comment>
<comment type="domain">
    <text evidence="3">Late-budding domains (L domains) are short sequence motifs essential for viral particle budding. They recruit proteins of the host ESCRT machinery (Endosomal Sorting Complex Required for Transport) or ESCRT-associated proteins. VP40 contains two overlapping L domains: a PTAP/PSAP motif, which interacts with the UEV domain of TSG101 and a PPXY motif which interacts with the WW domain 3 of NEDD4 E3 ubiquitin ligase and the three WW domains of SMURF2 E3 ubiquitin ligase.</text>
</comment>
<comment type="PTM">
    <text evidence="3">Sumoylated with host SUMO1, SUMO2. Sumoylation provides stability to VP40.</text>
</comment>
<comment type="PTM">
    <text evidence="3">Ubiquitinated by host WWP1. This modification mediates efficient viral budding.</text>
</comment>
<comment type="miscellaneous">
    <text evidence="3">Most abundant protein in the virion.</text>
</comment>
<comment type="similarity">
    <text evidence="4">Belongs to the filoviridae matrix protein VP40 family.</text>
</comment>
<name>VP40_EBOZ5</name>
<proteinExistence type="evidence at protein level"/>
<keyword id="KW-0002">3D-structure</keyword>
<keyword id="KW-1032">Host cell membrane</keyword>
<keyword id="KW-1035">Host cytoplasm</keyword>
<keyword id="KW-1039">Host endosome</keyword>
<keyword id="KW-1043">Host membrane</keyword>
<keyword id="KW-0945">Host-virus interaction</keyword>
<keyword id="KW-1090">Inhibition of host innate immune response by virus</keyword>
<keyword id="KW-1017">Isopeptide bond</keyword>
<keyword id="KW-0472">Membrane</keyword>
<keyword id="KW-0687">Ribonucleoprotein</keyword>
<keyword id="KW-0694">RNA-binding</keyword>
<keyword id="KW-0964">Secreted</keyword>
<keyword id="KW-0941">Suppressor of RNA silencing</keyword>
<keyword id="KW-0832">Ubl conjugation</keyword>
<keyword id="KW-1198">Viral budding</keyword>
<keyword id="KW-1187">Viral budding via the host ESCRT complexes</keyword>
<keyword id="KW-0899">Viral immunoevasion</keyword>
<keyword id="KW-0468">Viral matrix protein</keyword>
<keyword id="KW-1188">Viral release from host cell</keyword>
<keyword id="KW-0693">Viral RNA replication</keyword>
<keyword id="KW-0946">Virion</keyword>
<evidence type="ECO:0000250" key="1"/>
<evidence type="ECO:0000250" key="2">
    <source>
        <dbReference type="UniProtKB" id="P35260"/>
    </source>
</evidence>
<evidence type="ECO:0000250" key="3">
    <source>
        <dbReference type="UniProtKB" id="Q05128"/>
    </source>
</evidence>
<evidence type="ECO:0000305" key="4"/>
<evidence type="ECO:0007829" key="5">
    <source>
        <dbReference type="PDB" id="1ES6"/>
    </source>
</evidence>
<organismHost>
    <name type="scientific">Epomops franqueti</name>
    <name type="common">Franquet's epauletted fruit bat</name>
    <name type="synonym">Epomophorus franqueti</name>
    <dbReference type="NCBI Taxonomy" id="77231"/>
</organismHost>
<organismHost>
    <name type="scientific">Homo sapiens</name>
    <name type="common">Human</name>
    <dbReference type="NCBI Taxonomy" id="9606"/>
</organismHost>
<organismHost>
    <name type="scientific">Myonycteris torquata</name>
    <name type="common">Little collared fruit bat</name>
    <dbReference type="NCBI Taxonomy" id="77243"/>
</organismHost>
<reference key="1">
    <citation type="submission" date="2003-07" db="EMBL/GenBank/DDBJ databases">
        <authorList>
            <person name="Chain P.S.G."/>
            <person name="Ichou M.A."/>
            <person name="Malfatti S.A."/>
            <person name="Hajjaj A."/>
            <person name="Vergez L.M."/>
            <person name="Paragas J."/>
            <person name="Do L.H."/>
            <person name="Jahrling P.B."/>
            <person name="Smith K.L."/>
            <person name="McCready P.M."/>
            <person name="Ibrahim M.S."/>
        </authorList>
    </citation>
    <scope>NUCLEOTIDE SEQUENCE [GENOMIC RNA]</scope>
</reference>
<reference key="2">
    <citation type="journal article" date="2000" name="EMBO J.">
        <title>Crystal structure of the matrix protein VP40 from Ebola virus.</title>
        <authorList>
            <person name="Dessen A."/>
            <person name="Volchkov V."/>
            <person name="Dolnik O."/>
            <person name="Klenk H.-D."/>
            <person name="Weissenhorn W."/>
        </authorList>
    </citation>
    <scope>X-RAY CRYSTALLOGRAPHY (2.0 ANGSTROMS) OF 31-326</scope>
</reference>